<feature type="chain" id="PRO_1000134577" description="UDP-N-acetyl-D-mannosaminuronic acid transferase">
    <location>
        <begin position="1"/>
        <end position="246"/>
    </location>
</feature>
<comment type="function">
    <text evidence="1">Catalyzes the synthesis of Und-PP-GlcNAc-ManNAcA (Lipid II), the second lipid-linked intermediate involved in enterobacterial common antigen (ECA) synthesis.</text>
</comment>
<comment type="catalytic activity">
    <reaction evidence="1">
        <text>UDP-N-acetyl-alpha-D-mannosaminouronate + N-acetyl-alpha-D-glucosaminyl-di-trans,octa-cis-undecaprenyl diphosphate = beta-D-ManNAcA-(1-&gt;4)-alpha-D-GlcNAc-di-trans,octa-cis-undecaprenyl diphosphate + UDP + H(+)</text>
        <dbReference type="Rhea" id="RHEA:28366"/>
        <dbReference type="ChEBI" id="CHEBI:15378"/>
        <dbReference type="ChEBI" id="CHEBI:58223"/>
        <dbReference type="ChEBI" id="CHEBI:61495"/>
        <dbReference type="ChEBI" id="CHEBI:62959"/>
        <dbReference type="ChEBI" id="CHEBI:70731"/>
        <dbReference type="EC" id="2.4.1.180"/>
    </reaction>
</comment>
<comment type="pathway">
    <text evidence="1">Bacterial outer membrane biogenesis; enterobacterial common antigen biosynthesis.</text>
</comment>
<comment type="similarity">
    <text evidence="1">Belongs to the glycosyltransferase 26 family.</text>
</comment>
<reference key="1">
    <citation type="journal article" date="2008" name="DNA Res.">
        <title>Complete genome sequence and comparative analysis of the wild-type commensal Escherichia coli strain SE11 isolated from a healthy adult.</title>
        <authorList>
            <person name="Oshima K."/>
            <person name="Toh H."/>
            <person name="Ogura Y."/>
            <person name="Sasamoto H."/>
            <person name="Morita H."/>
            <person name="Park S.-H."/>
            <person name="Ooka T."/>
            <person name="Iyoda S."/>
            <person name="Taylor T.D."/>
            <person name="Hayashi T."/>
            <person name="Itoh K."/>
            <person name="Hattori M."/>
        </authorList>
    </citation>
    <scope>NUCLEOTIDE SEQUENCE [LARGE SCALE GENOMIC DNA]</scope>
    <source>
        <strain>SE11</strain>
    </source>
</reference>
<sequence length="246" mass="27962">MNNNTTAPTYTLRGLQLIGWRDMQHALDYLFADGQLKQGTLVAINAEKMLTIEDNAEVRELINAAEFKYADGISVVRSVRKKYPQAQVSRVAGADLWEELMARAGKEGTPVFLVGGKPEVLAQTEAKLRNQWNVNIVGSQDGYFKPEQRQALFERIHASGAQIVTVAMGSPKQEIFMRDCRLVHPDALYMGVGGTYDVFTGHVKRAPKIWQTLGLEWLYRLLSQPSRIKRQLRLLRYLRWHYTGNL</sequence>
<accession>B6I4D2</accession>
<dbReference type="EC" id="2.4.1.180" evidence="1"/>
<dbReference type="EMBL" id="AP009240">
    <property type="protein sequence ID" value="BAG79602.1"/>
    <property type="molecule type" value="Genomic_DNA"/>
</dbReference>
<dbReference type="RefSeq" id="WP_001064038.1">
    <property type="nucleotide sequence ID" value="NC_011415.1"/>
</dbReference>
<dbReference type="SMR" id="B6I4D2"/>
<dbReference type="CAZy" id="GT26">
    <property type="family name" value="Glycosyltransferase Family 26"/>
</dbReference>
<dbReference type="GeneID" id="93778149"/>
<dbReference type="KEGG" id="ecy:ECSE_4078"/>
<dbReference type="HOGENOM" id="CLU_063203_3_2_6"/>
<dbReference type="UniPathway" id="UPA00566"/>
<dbReference type="Proteomes" id="UP000008199">
    <property type="component" value="Chromosome"/>
</dbReference>
<dbReference type="GO" id="GO:0047241">
    <property type="term" value="F:lipopolysaccharide N-acetylmannosaminouronosyltransferase activity"/>
    <property type="evidence" value="ECO:0007669"/>
    <property type="project" value="UniProtKB-UniRule"/>
</dbReference>
<dbReference type="GO" id="GO:0009246">
    <property type="term" value="P:enterobacterial common antigen biosynthetic process"/>
    <property type="evidence" value="ECO:0007669"/>
    <property type="project" value="UniProtKB-UniRule"/>
</dbReference>
<dbReference type="CDD" id="cd06533">
    <property type="entry name" value="Glyco_transf_WecG_TagA"/>
    <property type="match status" value="1"/>
</dbReference>
<dbReference type="HAMAP" id="MF_01001">
    <property type="entry name" value="WecG_RffM"/>
    <property type="match status" value="1"/>
</dbReference>
<dbReference type="InterPro" id="IPR023085">
    <property type="entry name" value="UDP-ManNAcA_Trfase_WecG"/>
</dbReference>
<dbReference type="InterPro" id="IPR004629">
    <property type="entry name" value="WecG_TagA_CpsF"/>
</dbReference>
<dbReference type="NCBIfam" id="NF002980">
    <property type="entry name" value="PRK03692.1"/>
    <property type="match status" value="1"/>
</dbReference>
<dbReference type="NCBIfam" id="TIGR00696">
    <property type="entry name" value="wecG_tagA_cpsF"/>
    <property type="match status" value="1"/>
</dbReference>
<dbReference type="PANTHER" id="PTHR34136">
    <property type="match status" value="1"/>
</dbReference>
<dbReference type="PANTHER" id="PTHR34136:SF1">
    <property type="entry name" value="UDP-N-ACETYL-D-MANNOSAMINURONIC ACID TRANSFERASE"/>
    <property type="match status" value="1"/>
</dbReference>
<dbReference type="Pfam" id="PF03808">
    <property type="entry name" value="Glyco_tran_WecG"/>
    <property type="match status" value="1"/>
</dbReference>
<keyword id="KW-0328">Glycosyltransferase</keyword>
<keyword id="KW-0808">Transferase</keyword>
<evidence type="ECO:0000255" key="1">
    <source>
        <dbReference type="HAMAP-Rule" id="MF_01001"/>
    </source>
</evidence>
<gene>
    <name evidence="1" type="primary">wecG</name>
    <name evidence="1" type="synonym">rffM</name>
    <name type="ordered locus">ECSE_4078</name>
</gene>
<organism>
    <name type="scientific">Escherichia coli (strain SE11)</name>
    <dbReference type="NCBI Taxonomy" id="409438"/>
    <lineage>
        <taxon>Bacteria</taxon>
        <taxon>Pseudomonadati</taxon>
        <taxon>Pseudomonadota</taxon>
        <taxon>Gammaproteobacteria</taxon>
        <taxon>Enterobacterales</taxon>
        <taxon>Enterobacteriaceae</taxon>
        <taxon>Escherichia</taxon>
    </lineage>
</organism>
<name>WECG_ECOSE</name>
<proteinExistence type="inferred from homology"/>
<protein>
    <recommendedName>
        <fullName evidence="1">UDP-N-acetyl-D-mannosaminuronic acid transferase</fullName>
        <shortName evidence="1">UDP-ManNAcA transferase</shortName>
        <ecNumber evidence="1">2.4.1.180</ecNumber>
    </recommendedName>
</protein>